<organism>
    <name type="scientific">Latilactobacillus sakei subsp. sakei (strain 23K)</name>
    <name type="common">Lactobacillus sakei subsp. sakei</name>
    <dbReference type="NCBI Taxonomy" id="314315"/>
    <lineage>
        <taxon>Bacteria</taxon>
        <taxon>Bacillati</taxon>
        <taxon>Bacillota</taxon>
        <taxon>Bacilli</taxon>
        <taxon>Lactobacillales</taxon>
        <taxon>Lactobacillaceae</taxon>
        <taxon>Latilactobacillus</taxon>
    </lineage>
</organism>
<keyword id="KW-1185">Reference proteome</keyword>
<accession>Q38WY3</accession>
<sequence>MKQSFYRYLMTQRDPNNYEPVAQFANNAFFDQSFPKHEGDYELLSQYLELNGSYLPSMLIFDEAYQLYQESEQA</sequence>
<gene>
    <name type="ordered locus">LCA_0996</name>
</gene>
<feature type="chain" id="PRO_0000298743" description="UPF0346 protein LCA_0996">
    <location>
        <begin position="1"/>
        <end position="74"/>
    </location>
</feature>
<evidence type="ECO:0000255" key="1">
    <source>
        <dbReference type="HAMAP-Rule" id="MF_01538"/>
    </source>
</evidence>
<reference key="1">
    <citation type="journal article" date="2005" name="Nat. Biotechnol.">
        <title>The complete genome sequence of the meat-borne lactic acid bacterium Lactobacillus sakei 23K.</title>
        <authorList>
            <person name="Chaillou S."/>
            <person name="Champomier-Verges M.-C."/>
            <person name="Cornet M."/>
            <person name="Crutz-Le Coq A.-M."/>
            <person name="Dudez A.-M."/>
            <person name="Martin V."/>
            <person name="Beaufils S."/>
            <person name="Darbon-Rongere E."/>
            <person name="Bossy R."/>
            <person name="Loux V."/>
            <person name="Zagorec M."/>
        </authorList>
    </citation>
    <scope>NUCLEOTIDE SEQUENCE [LARGE SCALE GENOMIC DNA]</scope>
    <source>
        <strain>23K</strain>
    </source>
</reference>
<proteinExistence type="inferred from homology"/>
<name>Y996_LATSS</name>
<comment type="similarity">
    <text evidence="1">Belongs to the UPF0346 family.</text>
</comment>
<protein>
    <recommendedName>
        <fullName evidence="1">UPF0346 protein LCA_0996</fullName>
    </recommendedName>
</protein>
<dbReference type="EMBL" id="CR936503">
    <property type="protein sequence ID" value="CAI55298.1"/>
    <property type="molecule type" value="Genomic_DNA"/>
</dbReference>
<dbReference type="RefSeq" id="WP_011374698.1">
    <property type="nucleotide sequence ID" value="NC_007576.1"/>
</dbReference>
<dbReference type="SMR" id="Q38WY3"/>
<dbReference type="STRING" id="314315.LCA_0996"/>
<dbReference type="KEGG" id="lsa:LCA_0996"/>
<dbReference type="eggNOG" id="COG4479">
    <property type="taxonomic scope" value="Bacteria"/>
</dbReference>
<dbReference type="HOGENOM" id="CLU_177534_1_0_9"/>
<dbReference type="OrthoDB" id="2242851at2"/>
<dbReference type="Proteomes" id="UP000002707">
    <property type="component" value="Chromosome"/>
</dbReference>
<dbReference type="Gene3D" id="1.10.150.260">
    <property type="entry name" value="YozE SAM-like"/>
    <property type="match status" value="1"/>
</dbReference>
<dbReference type="HAMAP" id="MF_01538">
    <property type="entry name" value="UPF0346"/>
    <property type="match status" value="1"/>
</dbReference>
<dbReference type="InterPro" id="IPR010673">
    <property type="entry name" value="UPF0346"/>
</dbReference>
<dbReference type="InterPro" id="IPR023089">
    <property type="entry name" value="YozE_SAM-like"/>
</dbReference>
<dbReference type="InterPro" id="IPR036806">
    <property type="entry name" value="YozE_SAM-like_sf"/>
</dbReference>
<dbReference type="NCBIfam" id="NF010193">
    <property type="entry name" value="PRK13672.1"/>
    <property type="match status" value="1"/>
</dbReference>
<dbReference type="Pfam" id="PF06855">
    <property type="entry name" value="YozE_SAM_like"/>
    <property type="match status" value="1"/>
</dbReference>
<dbReference type="PIRSF" id="PIRSF037262">
    <property type="entry name" value="UCP037262"/>
    <property type="match status" value="1"/>
</dbReference>
<dbReference type="SUPFAM" id="SSF140652">
    <property type="entry name" value="YozE-like"/>
    <property type="match status" value="1"/>
</dbReference>